<dbReference type="EMBL" id="CP000304">
    <property type="protein sequence ID" value="ABP80490.1"/>
    <property type="molecule type" value="Genomic_DNA"/>
</dbReference>
<dbReference type="RefSeq" id="WP_011913947.1">
    <property type="nucleotide sequence ID" value="NC_009434.1"/>
</dbReference>
<dbReference type="SMR" id="A4VND9"/>
<dbReference type="KEGG" id="psa:PST_2844"/>
<dbReference type="eggNOG" id="COG2863">
    <property type="taxonomic scope" value="Bacteria"/>
</dbReference>
<dbReference type="HOGENOM" id="CLU_076280_0_1_6"/>
<dbReference type="Proteomes" id="UP000000233">
    <property type="component" value="Chromosome"/>
</dbReference>
<dbReference type="GO" id="GO:0042597">
    <property type="term" value="C:periplasmic space"/>
    <property type="evidence" value="ECO:0007669"/>
    <property type="project" value="InterPro"/>
</dbReference>
<dbReference type="GO" id="GO:0009055">
    <property type="term" value="F:electron transfer activity"/>
    <property type="evidence" value="ECO:0007669"/>
    <property type="project" value="InterPro"/>
</dbReference>
<dbReference type="GO" id="GO:0020037">
    <property type="term" value="F:heme binding"/>
    <property type="evidence" value="ECO:0007669"/>
    <property type="project" value="InterPro"/>
</dbReference>
<dbReference type="GO" id="GO:0005506">
    <property type="term" value="F:iron ion binding"/>
    <property type="evidence" value="ECO:0007669"/>
    <property type="project" value="InterPro"/>
</dbReference>
<dbReference type="Gene3D" id="1.10.760.10">
    <property type="entry name" value="Cytochrome c-like domain"/>
    <property type="match status" value="2"/>
</dbReference>
<dbReference type="InterPro" id="IPR009056">
    <property type="entry name" value="Cyt_c-like_dom"/>
</dbReference>
<dbReference type="InterPro" id="IPR036909">
    <property type="entry name" value="Cyt_c-like_dom_sf"/>
</dbReference>
<dbReference type="InterPro" id="IPR024167">
    <property type="entry name" value="Cytochrome_c4-like"/>
</dbReference>
<dbReference type="InterPro" id="IPR050597">
    <property type="entry name" value="Cytochrome_c_Oxidase_Subunit"/>
</dbReference>
<dbReference type="PANTHER" id="PTHR33751:SF11">
    <property type="entry name" value="BLL4483 PROTEIN"/>
    <property type="match status" value="1"/>
</dbReference>
<dbReference type="PANTHER" id="PTHR33751">
    <property type="entry name" value="CBB3-TYPE CYTOCHROME C OXIDASE SUBUNIT FIXP"/>
    <property type="match status" value="1"/>
</dbReference>
<dbReference type="Pfam" id="PF00034">
    <property type="entry name" value="Cytochrom_C"/>
    <property type="match status" value="2"/>
</dbReference>
<dbReference type="PIRSF" id="PIRSF000005">
    <property type="entry name" value="Cytochrome_c4"/>
    <property type="match status" value="1"/>
</dbReference>
<dbReference type="SUPFAM" id="SSF46626">
    <property type="entry name" value="Cytochrome c"/>
    <property type="match status" value="2"/>
</dbReference>
<dbReference type="PROSITE" id="PS51007">
    <property type="entry name" value="CYTC"/>
    <property type="match status" value="2"/>
</dbReference>
<evidence type="ECO:0000250" key="1"/>
<evidence type="ECO:0000255" key="2"/>
<evidence type="ECO:0000255" key="3">
    <source>
        <dbReference type="PROSITE-ProRule" id="PRU00433"/>
    </source>
</evidence>
<sequence>MKSIHWPLAGVAALLLSMQAQAADGQKIYTQGGANPAAMACATCHGADAMGMAAAGFPRLAGIDAGYSRKQLDDFRSGARSNPIMQPIAAALSDEEMDAVAATLEAMPAPDFAAIGRSEAAEGVGARLALRGAWERNIPECVACHGPAGMGVGASFPPLAGQSAQYLGAQLNAWRQGTRKNDPNDLMGHIARAMSDDEVQAVAEYFANVGQKETGQ</sequence>
<gene>
    <name type="primary">tsdB</name>
    <name type="ordered locus">PST_2844</name>
</gene>
<feature type="signal peptide" evidence="2">
    <location>
        <begin position="1"/>
        <end position="22"/>
    </location>
</feature>
<feature type="chain" id="PRO_0000430265" description="Thiosulfate dehydrogenase electron acceptor">
    <location>
        <begin position="23"/>
        <end position="216"/>
    </location>
</feature>
<feature type="domain" description="Cytochrome c 1" evidence="3">
    <location>
        <begin position="23"/>
        <end position="108"/>
    </location>
</feature>
<feature type="domain" description="Cytochrome c 2" evidence="3">
    <location>
        <begin position="118"/>
        <end position="210"/>
    </location>
</feature>
<feature type="binding site" description="covalent" evidence="3">
    <location>
        <position position="41"/>
    </location>
    <ligand>
        <name>heme c</name>
        <dbReference type="ChEBI" id="CHEBI:61717"/>
        <label>1</label>
    </ligand>
</feature>
<feature type="binding site" description="covalent" evidence="3">
    <location>
        <position position="44"/>
    </location>
    <ligand>
        <name>heme c</name>
        <dbReference type="ChEBI" id="CHEBI:61717"/>
        <label>1</label>
    </ligand>
</feature>
<feature type="binding site" description="axial binding residue" evidence="3">
    <location>
        <position position="45"/>
    </location>
    <ligand>
        <name>heme c</name>
        <dbReference type="ChEBI" id="CHEBI:61717"/>
        <label>1</label>
    </ligand>
    <ligandPart>
        <name>Fe</name>
        <dbReference type="ChEBI" id="CHEBI:18248"/>
    </ligandPart>
</feature>
<feature type="binding site" description="covalent" evidence="3">
    <location>
        <position position="141"/>
    </location>
    <ligand>
        <name>heme c</name>
        <dbReference type="ChEBI" id="CHEBI:61717"/>
        <label>2</label>
    </ligand>
</feature>
<feature type="binding site" description="covalent" evidence="3">
    <location>
        <position position="144"/>
    </location>
    <ligand>
        <name>heme c</name>
        <dbReference type="ChEBI" id="CHEBI:61717"/>
        <label>2</label>
    </ligand>
</feature>
<feature type="binding site" description="axial binding residue" evidence="3">
    <location>
        <position position="145"/>
    </location>
    <ligand>
        <name>heme c</name>
        <dbReference type="ChEBI" id="CHEBI:61717"/>
        <label>2</label>
    </ligand>
    <ligandPart>
        <name>Fe</name>
        <dbReference type="ChEBI" id="CHEBI:18248"/>
    </ligandPart>
</feature>
<protein>
    <recommendedName>
        <fullName>Thiosulfate dehydrogenase electron acceptor</fullName>
    </recommendedName>
</protein>
<name>TSDB_STUS1</name>
<keyword id="KW-0349">Heme</keyword>
<keyword id="KW-0408">Iron</keyword>
<keyword id="KW-0479">Metal-binding</keyword>
<keyword id="KW-1185">Reference proteome</keyword>
<keyword id="KW-0677">Repeat</keyword>
<keyword id="KW-0732">Signal</keyword>
<comment type="function">
    <text evidence="1">Acts as an electron acceptor for the thiosulfate dehydrogenase TsdA.</text>
</comment>
<comment type="PTM">
    <text evidence="1">Binds 2 heme c groups covalently per subunit.</text>
</comment>
<reference key="1">
    <citation type="journal article" date="2008" name="Proc. Natl. Acad. Sci. U.S.A.">
        <title>Nitrogen fixation island and rhizosphere competence traits in the genome of root-associated Pseudomonas stutzeri A1501.</title>
        <authorList>
            <person name="Yan Y."/>
            <person name="Yang J."/>
            <person name="Dou Y."/>
            <person name="Chen M."/>
            <person name="Ping S."/>
            <person name="Peng J."/>
            <person name="Lu W."/>
            <person name="Zhang W."/>
            <person name="Yao Z."/>
            <person name="Li H."/>
            <person name="Liu W."/>
            <person name="He S."/>
            <person name="Geng L."/>
            <person name="Zhang X."/>
            <person name="Yang F."/>
            <person name="Yu H."/>
            <person name="Zhan Y."/>
            <person name="Li D."/>
            <person name="Lin Z."/>
            <person name="Wang Y."/>
            <person name="Elmerich C."/>
            <person name="Lin M."/>
            <person name="Jin Q."/>
        </authorList>
    </citation>
    <scope>NUCLEOTIDE SEQUENCE [LARGE SCALE GENOMIC DNA]</scope>
    <source>
        <strain>A1501</strain>
    </source>
</reference>
<reference key="2">
    <citation type="journal article" date="2012" name="Environ. Microbiol.">
        <title>Thiosulfate dehydrogenase: a widespread unusual acidophilic c-type cytochrome.</title>
        <authorList>
            <person name="Denkmann K."/>
            <person name="Grein F."/>
            <person name="Zigann R."/>
            <person name="Siemen A."/>
            <person name="Bergmann J."/>
            <person name="van Helmont S."/>
            <person name="Nicolai A."/>
            <person name="Pereira I.A."/>
            <person name="Dahl C."/>
        </authorList>
    </citation>
    <scope>IDENTIFICATION</scope>
</reference>
<proteinExistence type="inferred from homology"/>
<organism>
    <name type="scientific">Stutzerimonas stutzeri (strain A1501)</name>
    <name type="common">Pseudomonas stutzeri</name>
    <dbReference type="NCBI Taxonomy" id="379731"/>
    <lineage>
        <taxon>Bacteria</taxon>
        <taxon>Pseudomonadati</taxon>
        <taxon>Pseudomonadota</taxon>
        <taxon>Gammaproteobacteria</taxon>
        <taxon>Pseudomonadales</taxon>
        <taxon>Pseudomonadaceae</taxon>
        <taxon>Stutzerimonas</taxon>
    </lineage>
</organism>
<accession>A4VND9</accession>